<protein>
    <recommendedName>
        <fullName>Cytochrome c2</fullName>
    </recommendedName>
</protein>
<keyword id="KW-0903">Direct protein sequencing</keyword>
<keyword id="KW-0249">Electron transport</keyword>
<keyword id="KW-0349">Heme</keyword>
<keyword id="KW-0408">Iron</keyword>
<keyword id="KW-0479">Metal-binding</keyword>
<keyword id="KW-0602">Photosynthesis</keyword>
<keyword id="KW-1185">Reference proteome</keyword>
<keyword id="KW-0732">Signal</keyword>
<keyword id="KW-0813">Transport</keyword>
<reference key="1">
    <citation type="journal article" date="2011" name="J. Bacteriol.">
        <title>Genome sequences of eight morphologically diverse alphaproteobacteria.</title>
        <authorList>
            <consortium name="US DOE Joint Genome Institute"/>
            <person name="Brown P.J."/>
            <person name="Kysela D.T."/>
            <person name="Buechlein A."/>
            <person name="Hemmerich C."/>
            <person name="Brun Y.V."/>
        </authorList>
    </citation>
    <scope>NUCLEOTIDE SEQUENCE [LARGE SCALE GENOMIC DNA]</scope>
    <source>
        <strain>ATCC 17100 / DSM 162 / LMG 4299 / NCIMB 10020 / ATH 3.1.1</strain>
    </source>
</reference>
<reference key="2">
    <citation type="journal article" date="1976" name="Proc. Natl. Acad. Sci. U.S.A.">
        <title>Primary structure determination of two cytochromes c2: close similarity to functionally unrelated mitochondrial cytochrome C.</title>
        <authorList>
            <person name="Ambler R.P."/>
            <person name="Meyer T.E."/>
            <person name="Kamen M.D."/>
        </authorList>
    </citation>
    <scope>PROTEIN SEQUENCE OF 22-125</scope>
    <source>
        <strain>ATCC 17100 / DSM 162 / LMG 4299 / NCIMB 10020 / ATH 3.1.1</strain>
    </source>
</reference>
<accession>P00082</accession>
<accession>E3I2Y7</accession>
<gene>
    <name type="ordered locus">Rvan_1007</name>
</gene>
<evidence type="ECO:0000255" key="1">
    <source>
        <dbReference type="PROSITE-ProRule" id="PRU00433"/>
    </source>
</evidence>
<evidence type="ECO:0000269" key="2">
    <source>
    </source>
</evidence>
<evidence type="ECO:0000305" key="3"/>
<dbReference type="EMBL" id="CP002292">
    <property type="protein sequence ID" value="ADP70281.1"/>
    <property type="molecule type" value="Genomic_DNA"/>
</dbReference>
<dbReference type="PIR" id="A00074">
    <property type="entry name" value="CCRD2"/>
</dbReference>
<dbReference type="RefSeq" id="WP_013418685.1">
    <property type="nucleotide sequence ID" value="NC_014664.1"/>
</dbReference>
<dbReference type="SMR" id="P00082"/>
<dbReference type="STRING" id="648757.Rvan_1007"/>
<dbReference type="KEGG" id="rva:Rvan_1007"/>
<dbReference type="eggNOG" id="COG3474">
    <property type="taxonomic scope" value="Bacteria"/>
</dbReference>
<dbReference type="HOGENOM" id="CLU_060944_2_1_5"/>
<dbReference type="OrthoDB" id="9805828at2"/>
<dbReference type="Proteomes" id="UP000001399">
    <property type="component" value="Chromosome"/>
</dbReference>
<dbReference type="GO" id="GO:0009055">
    <property type="term" value="F:electron transfer activity"/>
    <property type="evidence" value="ECO:0007669"/>
    <property type="project" value="InterPro"/>
</dbReference>
<dbReference type="GO" id="GO:0020037">
    <property type="term" value="F:heme binding"/>
    <property type="evidence" value="ECO:0007669"/>
    <property type="project" value="InterPro"/>
</dbReference>
<dbReference type="GO" id="GO:0046872">
    <property type="term" value="F:metal ion binding"/>
    <property type="evidence" value="ECO:0007669"/>
    <property type="project" value="UniProtKB-KW"/>
</dbReference>
<dbReference type="GO" id="GO:0015979">
    <property type="term" value="P:photosynthesis"/>
    <property type="evidence" value="ECO:0007669"/>
    <property type="project" value="UniProtKB-KW"/>
</dbReference>
<dbReference type="Gene3D" id="1.10.760.10">
    <property type="entry name" value="Cytochrome c-like domain"/>
    <property type="match status" value="1"/>
</dbReference>
<dbReference type="InterPro" id="IPR009056">
    <property type="entry name" value="Cyt_c-like_dom"/>
</dbReference>
<dbReference type="InterPro" id="IPR036909">
    <property type="entry name" value="Cyt_c-like_dom_sf"/>
</dbReference>
<dbReference type="InterPro" id="IPR002327">
    <property type="entry name" value="Cyt_c_1A/1B"/>
</dbReference>
<dbReference type="PANTHER" id="PTHR11961">
    <property type="entry name" value="CYTOCHROME C"/>
    <property type="match status" value="1"/>
</dbReference>
<dbReference type="Pfam" id="PF00034">
    <property type="entry name" value="Cytochrom_C"/>
    <property type="match status" value="1"/>
</dbReference>
<dbReference type="PRINTS" id="PR00604">
    <property type="entry name" value="CYTCHRMECIAB"/>
</dbReference>
<dbReference type="SUPFAM" id="SSF46626">
    <property type="entry name" value="Cytochrome c"/>
    <property type="match status" value="1"/>
</dbReference>
<dbReference type="PROSITE" id="PS51007">
    <property type="entry name" value="CYTC"/>
    <property type="match status" value="1"/>
</dbReference>
<comment type="function">
    <text>Cytochrome c2 is found mainly in purple, non-sulfur, photosynthetic bacteria where it functions as the electron donor to the oxidized bacteriochlorophyll in the photophosphorylation pathway. However, it may also have a role in the respiratory chain and is found in some non-photosynthetic bacteria.</text>
</comment>
<comment type="PTM">
    <text>Binds 1 heme c group covalently per subunit.</text>
</comment>
<comment type="similarity">
    <text evidence="3">Belongs to the cytochrome c family.</text>
</comment>
<feature type="signal peptide" evidence="2">
    <location>
        <begin position="1"/>
        <end position="21"/>
    </location>
</feature>
<feature type="chain" id="PRO_0000108348" description="Cytochrome c2">
    <location>
        <begin position="22"/>
        <end position="125"/>
    </location>
</feature>
<feature type="domain" description="Cytochrome c" evidence="1">
    <location>
        <begin position="23"/>
        <end position="123"/>
    </location>
</feature>
<feature type="binding site" description="covalent">
    <location>
        <position position="35"/>
    </location>
    <ligand>
        <name>heme c</name>
        <dbReference type="ChEBI" id="CHEBI:61717"/>
    </ligand>
</feature>
<feature type="binding site" description="covalent">
    <location>
        <position position="38"/>
    </location>
    <ligand>
        <name>heme c</name>
        <dbReference type="ChEBI" id="CHEBI:61717"/>
    </ligand>
</feature>
<feature type="binding site" description="axial binding residue">
    <location>
        <position position="39"/>
    </location>
    <ligand>
        <name>heme c</name>
        <dbReference type="ChEBI" id="CHEBI:61717"/>
    </ligand>
    <ligandPart>
        <name>Fe</name>
        <dbReference type="ChEBI" id="CHEBI:18248"/>
    </ligandPart>
</feature>
<feature type="binding site" description="axial binding residue">
    <location>
        <position position="101"/>
    </location>
    <ligand>
        <name>heme c</name>
        <dbReference type="ChEBI" id="CHEBI:61717"/>
    </ligand>
    <ligandPart>
        <name>Fe</name>
        <dbReference type="ChEBI" id="CHEBI:18248"/>
    </ligandPart>
</feature>
<feature type="sequence conflict" description="In Ref. 2; AA sequence." evidence="3" ref="2">
    <original>P</original>
    <variation>N</variation>
    <location>
        <position position="47"/>
    </location>
</feature>
<feature type="sequence conflict" description="In Ref. 2; AA sequence." evidence="3" ref="2">
    <original>V</original>
    <variation>E</variation>
    <location>
        <position position="52"/>
    </location>
</feature>
<feature type="sequence conflict" description="In Ref. 2; AA sequence." evidence="3" ref="2">
    <original>NVVGS</original>
    <variation>DVFGQ</variation>
    <location>
        <begin position="55"/>
        <end position="59"/>
    </location>
</feature>
<feature type="sequence conflict" description="In Ref. 2; AA sequence." evidence="3" ref="2">
    <original>S</original>
    <variation>A</variation>
    <location>
        <position position="63"/>
    </location>
</feature>
<feature type="sequence conflict" description="In Ref. 2; AA sequence." evidence="3" ref="2">
    <original>FLATQHGQ</original>
    <variation>YLKQLSGK</variation>
    <location>
        <begin position="118"/>
        <end position="125"/>
    </location>
</feature>
<proteinExistence type="evidence at protein level"/>
<organism>
    <name type="scientific">Rhodomicrobium vannielii (strain ATCC 17100 / DSM 162 / LMG 4299 / NCIMB 10020 / ATH 3.1.1)</name>
    <dbReference type="NCBI Taxonomy" id="648757"/>
    <lineage>
        <taxon>Bacteria</taxon>
        <taxon>Pseudomonadati</taxon>
        <taxon>Pseudomonadota</taxon>
        <taxon>Alphaproteobacteria</taxon>
        <taxon>Hyphomicrobiales</taxon>
        <taxon>Hyphomicrobiaceae</taxon>
        <taxon>Rhodomicrobium</taxon>
    </lineage>
</organism>
<sequence>MKAIKIAMVGAALVWSASAYAAGDPVKGEQVFKQCKICHQVGPTAKPGVGPVQNNVVGSKAGSRPGFNYSDAMKNSGLTWDEATLDKYLENPKAVVPGTKMVFVGLKNPQDRADVIAFLATQHGQ</sequence>
<name>CYC2_RHOVT</name>